<gene>
    <name evidence="1" type="primary">mtnX</name>
    <name type="ordered locus">MAE_51120</name>
</gene>
<feature type="chain" id="PRO_0000357489" description="2-hydroxy-3-keto-5-methylthiopentenyl-1-phosphate phosphatase">
    <location>
        <begin position="1"/>
        <end position="210"/>
    </location>
</feature>
<name>MTNX_MICAN</name>
<evidence type="ECO:0000255" key="1">
    <source>
        <dbReference type="HAMAP-Rule" id="MF_01680"/>
    </source>
</evidence>
<organism>
    <name type="scientific">Microcystis aeruginosa (strain NIES-843 / IAM M-2473)</name>
    <dbReference type="NCBI Taxonomy" id="449447"/>
    <lineage>
        <taxon>Bacteria</taxon>
        <taxon>Bacillati</taxon>
        <taxon>Cyanobacteriota</taxon>
        <taxon>Cyanophyceae</taxon>
        <taxon>Oscillatoriophycideae</taxon>
        <taxon>Chroococcales</taxon>
        <taxon>Microcystaceae</taxon>
        <taxon>Microcystis</taxon>
    </lineage>
</organism>
<comment type="function">
    <text evidence="1">Dephosphorylates 2-hydroxy-3-keto-5-methylthiopentenyl-1-phosphate (HK-MTPenyl-1-P) yielding 1,2-dihydroxy-3-keto-5-methylthiopentene (DHK-MTPene).</text>
</comment>
<comment type="catalytic activity">
    <reaction evidence="1">
        <text>2-hydroxy-5-methylsulfanyl-3-oxopent-1-enyl phosphate + H2O = 1,2-dihydroxy-5-(methylsulfanyl)pent-1-en-3-one + phosphate</text>
        <dbReference type="Rhea" id="RHEA:14481"/>
        <dbReference type="ChEBI" id="CHEBI:15377"/>
        <dbReference type="ChEBI" id="CHEBI:43474"/>
        <dbReference type="ChEBI" id="CHEBI:49252"/>
        <dbReference type="ChEBI" id="CHEBI:59505"/>
        <dbReference type="EC" id="3.1.3.87"/>
    </reaction>
</comment>
<comment type="pathway">
    <text evidence="1">Amino-acid biosynthesis; L-methionine biosynthesis via salvage pathway; L-methionine from S-methyl-5-thio-alpha-D-ribose 1-phosphate: step 4/6.</text>
</comment>
<comment type="similarity">
    <text evidence="1">Belongs to the HAD-like hydrolase superfamily. MtnX family.</text>
</comment>
<dbReference type="EC" id="3.1.3.87" evidence="1"/>
<dbReference type="EMBL" id="AP009552">
    <property type="protein sequence ID" value="BAG04934.1"/>
    <property type="molecule type" value="Genomic_DNA"/>
</dbReference>
<dbReference type="RefSeq" id="WP_004161025.1">
    <property type="nucleotide sequence ID" value="NC_010296.1"/>
</dbReference>
<dbReference type="SMR" id="B0JX47"/>
<dbReference type="STRING" id="449447.MAE_51120"/>
<dbReference type="PaxDb" id="449447-MAE_51120"/>
<dbReference type="EnsemblBacteria" id="BAG04934">
    <property type="protein sequence ID" value="BAG04934"/>
    <property type="gene ID" value="MAE_51120"/>
</dbReference>
<dbReference type="KEGG" id="mar:MAE_51120"/>
<dbReference type="eggNOG" id="COG4359">
    <property type="taxonomic scope" value="Bacteria"/>
</dbReference>
<dbReference type="HOGENOM" id="CLU_058495_2_1_3"/>
<dbReference type="BioCyc" id="MAER449447:MAE_RS22210-MONOMER"/>
<dbReference type="UniPathway" id="UPA00904">
    <property type="reaction ID" value="UER00877"/>
</dbReference>
<dbReference type="Proteomes" id="UP000001510">
    <property type="component" value="Chromosome"/>
</dbReference>
<dbReference type="GO" id="GO:0005737">
    <property type="term" value="C:cytoplasm"/>
    <property type="evidence" value="ECO:0007669"/>
    <property type="project" value="TreeGrafter"/>
</dbReference>
<dbReference type="GO" id="GO:0043716">
    <property type="term" value="F:2-hydroxy-3-keto-5-methylthiopentenyl-1-phosphate phosphatase activity"/>
    <property type="evidence" value="ECO:0007669"/>
    <property type="project" value="UniProtKB-UniRule"/>
</dbReference>
<dbReference type="GO" id="GO:0036424">
    <property type="term" value="F:L-phosphoserine phosphatase activity"/>
    <property type="evidence" value="ECO:0007669"/>
    <property type="project" value="TreeGrafter"/>
</dbReference>
<dbReference type="GO" id="GO:0000287">
    <property type="term" value="F:magnesium ion binding"/>
    <property type="evidence" value="ECO:0007669"/>
    <property type="project" value="TreeGrafter"/>
</dbReference>
<dbReference type="GO" id="GO:0019509">
    <property type="term" value="P:L-methionine salvage from methylthioadenosine"/>
    <property type="evidence" value="ECO:0007669"/>
    <property type="project" value="UniProtKB-UniRule"/>
</dbReference>
<dbReference type="GO" id="GO:0006564">
    <property type="term" value="P:L-serine biosynthetic process"/>
    <property type="evidence" value="ECO:0007669"/>
    <property type="project" value="TreeGrafter"/>
</dbReference>
<dbReference type="Gene3D" id="3.90.1470.20">
    <property type="match status" value="1"/>
</dbReference>
<dbReference type="Gene3D" id="3.40.50.1000">
    <property type="entry name" value="HAD superfamily/HAD-like"/>
    <property type="match status" value="1"/>
</dbReference>
<dbReference type="HAMAP" id="MF_01680">
    <property type="entry name" value="Salvage_MtnX"/>
    <property type="match status" value="1"/>
</dbReference>
<dbReference type="InterPro" id="IPR050582">
    <property type="entry name" value="HAD-like_SerB"/>
</dbReference>
<dbReference type="InterPro" id="IPR036412">
    <property type="entry name" value="HAD-like_sf"/>
</dbReference>
<dbReference type="InterPro" id="IPR017718">
    <property type="entry name" value="HAD-SF_hydro_IB_MtnX"/>
</dbReference>
<dbReference type="InterPro" id="IPR023214">
    <property type="entry name" value="HAD_sf"/>
</dbReference>
<dbReference type="NCBIfam" id="TIGR01488">
    <property type="entry name" value="HAD-SF-IB"/>
    <property type="match status" value="1"/>
</dbReference>
<dbReference type="PANTHER" id="PTHR43344">
    <property type="entry name" value="PHOSPHOSERINE PHOSPHATASE"/>
    <property type="match status" value="1"/>
</dbReference>
<dbReference type="PANTHER" id="PTHR43344:SF21">
    <property type="entry name" value="POLYOL PHOSPHATE PHOSPHATASE PYP1"/>
    <property type="match status" value="1"/>
</dbReference>
<dbReference type="Pfam" id="PF12710">
    <property type="entry name" value="HAD"/>
    <property type="match status" value="1"/>
</dbReference>
<dbReference type="SUPFAM" id="SSF56784">
    <property type="entry name" value="HAD-like"/>
    <property type="match status" value="1"/>
</dbReference>
<reference key="1">
    <citation type="journal article" date="2007" name="DNA Res.">
        <title>Complete genomic structure of the bloom-forming toxic cyanobacterium Microcystis aeruginosa NIES-843.</title>
        <authorList>
            <person name="Kaneko T."/>
            <person name="Nakajima N."/>
            <person name="Okamoto S."/>
            <person name="Suzuki I."/>
            <person name="Tanabe Y."/>
            <person name="Tamaoki M."/>
            <person name="Nakamura Y."/>
            <person name="Kasai F."/>
            <person name="Watanabe A."/>
            <person name="Kawashima K."/>
            <person name="Kishida Y."/>
            <person name="Ono A."/>
            <person name="Shimizu Y."/>
            <person name="Takahashi C."/>
            <person name="Minami C."/>
            <person name="Fujishiro T."/>
            <person name="Kohara M."/>
            <person name="Katoh M."/>
            <person name="Nakazaki N."/>
            <person name="Nakayama S."/>
            <person name="Yamada M."/>
            <person name="Tabata S."/>
            <person name="Watanabe M.M."/>
        </authorList>
    </citation>
    <scope>NUCLEOTIDE SEQUENCE [LARGE SCALE GENOMIC DNA]</scope>
    <source>
        <strain>NIES-843 / IAM M-247</strain>
    </source>
</reference>
<proteinExistence type="inferred from homology"/>
<protein>
    <recommendedName>
        <fullName evidence="1">2-hydroxy-3-keto-5-methylthiopentenyl-1-phosphate phosphatase</fullName>
        <shortName evidence="1">HK-MTPenyl-1-P phosphatase</shortName>
        <ecNumber evidence="1">3.1.3.87</ecNumber>
    </recommendedName>
</protein>
<sequence length="210" mass="23806">MSKIVFCDFDGTITAVETFAGMLKEFAPDLSAQIMPQMYARTLTLRRGVRQLLESIPSQKYADILAYAESKPIRPGLAEFLAFLQEQSIPFIIISGGIQGMIETVLKREGLLDKVTAIYGVNLHTQGEYLQVHSDWENETELVAKALIMAKYSGVETIAIGDSVTDITMARRADLVFARDRLIDYLQAENQPYIPWDNFFEIREYLLLRD</sequence>
<keyword id="KW-0028">Amino-acid biosynthesis</keyword>
<keyword id="KW-0378">Hydrolase</keyword>
<keyword id="KW-0486">Methionine biosynthesis</keyword>
<accession>B0JX47</accession>